<keyword id="KW-0687">Ribonucleoprotein</keyword>
<keyword id="KW-0689">Ribosomal protein</keyword>
<evidence type="ECO:0000255" key="1">
    <source>
        <dbReference type="HAMAP-Rule" id="MF_00251"/>
    </source>
</evidence>
<evidence type="ECO:0000305" key="2"/>
<dbReference type="EMBL" id="AM286415">
    <property type="protein sequence ID" value="CAL13921.1"/>
    <property type="molecule type" value="Genomic_DNA"/>
</dbReference>
<dbReference type="RefSeq" id="YP_001008047.1">
    <property type="nucleotide sequence ID" value="NC_008800.1"/>
</dbReference>
<dbReference type="SMR" id="A1JS06"/>
<dbReference type="KEGG" id="yen:YE3902"/>
<dbReference type="PATRIC" id="fig|393305.7.peg.4152"/>
<dbReference type="eggNOG" id="COG0257">
    <property type="taxonomic scope" value="Bacteria"/>
</dbReference>
<dbReference type="HOGENOM" id="CLU_135723_6_2_6"/>
<dbReference type="OrthoDB" id="9802520at2"/>
<dbReference type="PRO" id="PR:A1JS06"/>
<dbReference type="Proteomes" id="UP000000642">
    <property type="component" value="Chromosome"/>
</dbReference>
<dbReference type="GO" id="GO:0005737">
    <property type="term" value="C:cytoplasm"/>
    <property type="evidence" value="ECO:0007669"/>
    <property type="project" value="UniProtKB-ARBA"/>
</dbReference>
<dbReference type="GO" id="GO:1990904">
    <property type="term" value="C:ribonucleoprotein complex"/>
    <property type="evidence" value="ECO:0007669"/>
    <property type="project" value="UniProtKB-KW"/>
</dbReference>
<dbReference type="GO" id="GO:0005840">
    <property type="term" value="C:ribosome"/>
    <property type="evidence" value="ECO:0007669"/>
    <property type="project" value="UniProtKB-KW"/>
</dbReference>
<dbReference type="GO" id="GO:0003735">
    <property type="term" value="F:structural constituent of ribosome"/>
    <property type="evidence" value="ECO:0007669"/>
    <property type="project" value="InterPro"/>
</dbReference>
<dbReference type="GO" id="GO:0006412">
    <property type="term" value="P:translation"/>
    <property type="evidence" value="ECO:0007669"/>
    <property type="project" value="UniProtKB-UniRule"/>
</dbReference>
<dbReference type="HAMAP" id="MF_00251">
    <property type="entry name" value="Ribosomal_bL36"/>
    <property type="match status" value="1"/>
</dbReference>
<dbReference type="InterPro" id="IPR000473">
    <property type="entry name" value="Ribosomal_bL36"/>
</dbReference>
<dbReference type="InterPro" id="IPR035977">
    <property type="entry name" value="Ribosomal_bL36_sp"/>
</dbReference>
<dbReference type="NCBIfam" id="TIGR01022">
    <property type="entry name" value="rpmJ_bact"/>
    <property type="match status" value="1"/>
</dbReference>
<dbReference type="PANTHER" id="PTHR42888">
    <property type="entry name" value="50S RIBOSOMAL PROTEIN L36, CHLOROPLASTIC"/>
    <property type="match status" value="1"/>
</dbReference>
<dbReference type="PANTHER" id="PTHR42888:SF1">
    <property type="entry name" value="LARGE RIBOSOMAL SUBUNIT PROTEIN BL36C"/>
    <property type="match status" value="1"/>
</dbReference>
<dbReference type="Pfam" id="PF00444">
    <property type="entry name" value="Ribosomal_L36"/>
    <property type="match status" value="1"/>
</dbReference>
<dbReference type="SUPFAM" id="SSF57840">
    <property type="entry name" value="Ribosomal protein L36"/>
    <property type="match status" value="1"/>
</dbReference>
<dbReference type="PROSITE" id="PS00828">
    <property type="entry name" value="RIBOSOMAL_L36"/>
    <property type="match status" value="1"/>
</dbReference>
<organism>
    <name type="scientific">Yersinia enterocolitica serotype O:8 / biotype 1B (strain NCTC 13174 / 8081)</name>
    <dbReference type="NCBI Taxonomy" id="393305"/>
    <lineage>
        <taxon>Bacteria</taxon>
        <taxon>Pseudomonadati</taxon>
        <taxon>Pseudomonadota</taxon>
        <taxon>Gammaproteobacteria</taxon>
        <taxon>Enterobacterales</taxon>
        <taxon>Yersiniaceae</taxon>
        <taxon>Yersinia</taxon>
    </lineage>
</organism>
<comment type="similarity">
    <text evidence="1">Belongs to the bacterial ribosomal protein bL36 family.</text>
</comment>
<accession>A1JS06</accession>
<name>RL362_YERE8</name>
<feature type="chain" id="PRO_0000344731" description="Large ribosomal subunit protein bL36B">
    <location>
        <begin position="1"/>
        <end position="38"/>
    </location>
</feature>
<gene>
    <name evidence="1" type="primary">rpmJ2</name>
    <name type="ordered locus">YE3902</name>
</gene>
<sequence>MKVRASVKKLCRNCKIVKRNGVVRVICSAEPKHKQRQG</sequence>
<proteinExistence type="inferred from homology"/>
<protein>
    <recommendedName>
        <fullName evidence="1">Large ribosomal subunit protein bL36B</fullName>
    </recommendedName>
    <alternativeName>
        <fullName evidence="2">50S ribosomal protein L36 2</fullName>
    </alternativeName>
</protein>
<reference key="1">
    <citation type="journal article" date="2006" name="PLoS Genet.">
        <title>The complete genome sequence and comparative genome analysis of the high pathogenicity Yersinia enterocolitica strain 8081.</title>
        <authorList>
            <person name="Thomson N.R."/>
            <person name="Howard S."/>
            <person name="Wren B.W."/>
            <person name="Holden M.T.G."/>
            <person name="Crossman L."/>
            <person name="Challis G.L."/>
            <person name="Churcher C."/>
            <person name="Mungall K."/>
            <person name="Brooks K."/>
            <person name="Chillingworth T."/>
            <person name="Feltwell T."/>
            <person name="Abdellah Z."/>
            <person name="Hauser H."/>
            <person name="Jagels K."/>
            <person name="Maddison M."/>
            <person name="Moule S."/>
            <person name="Sanders M."/>
            <person name="Whitehead S."/>
            <person name="Quail M.A."/>
            <person name="Dougan G."/>
            <person name="Parkhill J."/>
            <person name="Prentice M.B."/>
        </authorList>
    </citation>
    <scope>NUCLEOTIDE SEQUENCE [LARGE SCALE GENOMIC DNA]</scope>
    <source>
        <strain>NCTC 13174 / 8081</strain>
    </source>
</reference>